<sequence length="299" mass="30996">MDPTLISLGALALAGAAATVSGCAEDLESDVGSQSNPNSQVQLGPQMGNIHRYFNKAISGEPVSYGLYVAVAGTIAWALINAGLNAVLAIIVGSGVAAVVHGAYSVSAFLGRTVGQSKKFGQPVYMDVLTSHIGPIVGHGFIAVFTMTLAAYLATTALGNPFPLPLVALIFGITVGAIGSSTGDVHYGAEREYQKYPFGGGIPVANQGDIDIYAEYGVRNGLDSSYFCSRFGGPLTGLCFGLIIFLDGWRSILGNIIGGDLVTKTSIALLVGLLVVAVAAGINRKLEVYARNKYGPYRN</sequence>
<comment type="function">
    <text evidence="1">Part of a complex that catalyzes the formation of methyl-coenzyme M and tetrahydromethanopterin from coenzyme M and methyl-tetrahydromethanopterin. This is an energy-conserving, sodium-ion translocating step.</text>
</comment>
<comment type="catalytic activity">
    <reaction evidence="1">
        <text>5-methyl-5,6,7,8-tetrahydromethanopterin + coenzyme M + 2 Na(+)(in) = 5,6,7,8-tetrahydromethanopterin + methyl-coenzyme M + 2 Na(+)(out)</text>
        <dbReference type="Rhea" id="RHEA:53492"/>
        <dbReference type="ChEBI" id="CHEBI:29101"/>
        <dbReference type="ChEBI" id="CHEBI:58103"/>
        <dbReference type="ChEBI" id="CHEBI:58116"/>
        <dbReference type="ChEBI" id="CHEBI:58286"/>
        <dbReference type="ChEBI" id="CHEBI:58319"/>
        <dbReference type="EC" id="7.2.1.4"/>
    </reaction>
</comment>
<comment type="pathway">
    <text evidence="1">One-carbon metabolism; methanogenesis from CO(2); methyl-coenzyme M from 5,10-methylene-5,6,7,8-tetrahydromethanopterin: step 2/2.</text>
</comment>
<comment type="subunit">
    <text evidence="1">The complex is composed of 8 subunits; MtrA, MtrB, MtrC, MtrD, MtrE, MtrF, MtrG and MtrH.</text>
</comment>
<comment type="subcellular location">
    <subcellularLocation>
        <location evidence="1">Cell membrane</location>
        <topology evidence="1">Multi-pass membrane protein</topology>
    </subcellularLocation>
</comment>
<comment type="similarity">
    <text evidence="1">Belongs to the MtrE family.</text>
</comment>
<accession>A4FVW5</accession>
<evidence type="ECO:0000255" key="1">
    <source>
        <dbReference type="HAMAP-Rule" id="MF_01098"/>
    </source>
</evidence>
<name>MTRE_METM5</name>
<keyword id="KW-1003">Cell membrane</keyword>
<keyword id="KW-0472">Membrane</keyword>
<keyword id="KW-0484">Methanogenesis</keyword>
<keyword id="KW-0489">Methyltransferase</keyword>
<keyword id="KW-0554">One-carbon metabolism</keyword>
<keyword id="KW-0808">Transferase</keyword>
<keyword id="KW-1278">Translocase</keyword>
<keyword id="KW-0812">Transmembrane</keyword>
<keyword id="KW-1133">Transmembrane helix</keyword>
<reference key="1">
    <citation type="submission" date="2007-03" db="EMBL/GenBank/DDBJ databases">
        <title>Complete sequence of chromosome of Methanococcus maripaludis C5.</title>
        <authorList>
            <consortium name="US DOE Joint Genome Institute"/>
            <person name="Copeland A."/>
            <person name="Lucas S."/>
            <person name="Lapidus A."/>
            <person name="Barry K."/>
            <person name="Glavina del Rio T."/>
            <person name="Dalin E."/>
            <person name="Tice H."/>
            <person name="Pitluck S."/>
            <person name="Chertkov O."/>
            <person name="Brettin T."/>
            <person name="Bruce D."/>
            <person name="Han C."/>
            <person name="Detter J.C."/>
            <person name="Schmutz J."/>
            <person name="Larimer F."/>
            <person name="Land M."/>
            <person name="Hauser L."/>
            <person name="Kyrpides N."/>
            <person name="Mikhailova N."/>
            <person name="Sieprawska-Lupa M."/>
            <person name="Whitman W.B."/>
            <person name="Richardson P."/>
        </authorList>
    </citation>
    <scope>NUCLEOTIDE SEQUENCE [LARGE SCALE GENOMIC DNA]</scope>
    <source>
        <strain>C5 / ATCC BAA-1333</strain>
    </source>
</reference>
<protein>
    <recommendedName>
        <fullName evidence="1">Tetrahydromethanopterin S-methyltransferase subunit E</fullName>
        <ecNumber evidence="1">7.2.1.4</ecNumber>
    </recommendedName>
    <alternativeName>
        <fullName evidence="1">N5-methyltetrahydromethanopterin--coenzyme M methyltransferase subunit E</fullName>
    </alternativeName>
</protein>
<organism>
    <name type="scientific">Methanococcus maripaludis (strain C5 / ATCC BAA-1333)</name>
    <dbReference type="NCBI Taxonomy" id="402880"/>
    <lineage>
        <taxon>Archaea</taxon>
        <taxon>Methanobacteriati</taxon>
        <taxon>Methanobacteriota</taxon>
        <taxon>Methanomada group</taxon>
        <taxon>Methanococci</taxon>
        <taxon>Methanococcales</taxon>
        <taxon>Methanococcaceae</taxon>
        <taxon>Methanococcus</taxon>
    </lineage>
</organism>
<dbReference type="EC" id="7.2.1.4" evidence="1"/>
<dbReference type="EMBL" id="CP000609">
    <property type="protein sequence ID" value="ABO34333.1"/>
    <property type="molecule type" value="Genomic_DNA"/>
</dbReference>
<dbReference type="RefSeq" id="WP_011867795.1">
    <property type="nucleotide sequence ID" value="NC_009135.1"/>
</dbReference>
<dbReference type="SMR" id="A4FVW5"/>
<dbReference type="STRING" id="402880.MmarC5_0016"/>
<dbReference type="GeneID" id="4928237"/>
<dbReference type="KEGG" id="mmq:MmarC5_0016"/>
<dbReference type="eggNOG" id="arCOG04870">
    <property type="taxonomic scope" value="Archaea"/>
</dbReference>
<dbReference type="HOGENOM" id="CLU_958513_0_0_2"/>
<dbReference type="OrthoDB" id="82302at2157"/>
<dbReference type="UniPathway" id="UPA00640">
    <property type="reaction ID" value="UER00698"/>
</dbReference>
<dbReference type="Proteomes" id="UP000000253">
    <property type="component" value="Chromosome"/>
</dbReference>
<dbReference type="GO" id="GO:0005737">
    <property type="term" value="C:cytoplasm"/>
    <property type="evidence" value="ECO:0007669"/>
    <property type="project" value="InterPro"/>
</dbReference>
<dbReference type="GO" id="GO:0005886">
    <property type="term" value="C:plasma membrane"/>
    <property type="evidence" value="ECO:0007669"/>
    <property type="project" value="UniProtKB-SubCell"/>
</dbReference>
<dbReference type="GO" id="GO:0012506">
    <property type="term" value="C:vesicle membrane"/>
    <property type="evidence" value="ECO:0007669"/>
    <property type="project" value="InterPro"/>
</dbReference>
<dbReference type="GO" id="GO:0030269">
    <property type="term" value="F:tetrahydromethanopterin S-methyltransferase activity"/>
    <property type="evidence" value="ECO:0007669"/>
    <property type="project" value="UniProtKB-UniRule"/>
</dbReference>
<dbReference type="GO" id="GO:0019386">
    <property type="term" value="P:methanogenesis, from carbon dioxide"/>
    <property type="evidence" value="ECO:0007669"/>
    <property type="project" value="UniProtKB-UniRule"/>
</dbReference>
<dbReference type="GO" id="GO:0032259">
    <property type="term" value="P:methylation"/>
    <property type="evidence" value="ECO:0007669"/>
    <property type="project" value="UniProtKB-KW"/>
</dbReference>
<dbReference type="GO" id="GO:0006730">
    <property type="term" value="P:one-carbon metabolic process"/>
    <property type="evidence" value="ECO:0007669"/>
    <property type="project" value="UniProtKB-UniRule"/>
</dbReference>
<dbReference type="HAMAP" id="MF_01098">
    <property type="entry name" value="MtrE"/>
    <property type="match status" value="1"/>
</dbReference>
<dbReference type="InterPro" id="IPR005780">
    <property type="entry name" value="MeTrfase_E"/>
</dbReference>
<dbReference type="NCBIfam" id="TIGR01113">
    <property type="entry name" value="mtrE"/>
    <property type="match status" value="1"/>
</dbReference>
<dbReference type="Pfam" id="PF04206">
    <property type="entry name" value="MtrE"/>
    <property type="match status" value="1"/>
</dbReference>
<dbReference type="PIRSF" id="PIRSF016509">
    <property type="entry name" value="MtrE"/>
    <property type="match status" value="1"/>
</dbReference>
<proteinExistence type="inferred from homology"/>
<gene>
    <name evidence="1" type="primary">mtrE</name>
    <name type="ordered locus">MmarC5_0016</name>
</gene>
<feature type="chain" id="PRO_1000064944" description="Tetrahydromethanopterin S-methyltransferase subunit E">
    <location>
        <begin position="1"/>
        <end position="299"/>
    </location>
</feature>
<feature type="transmembrane region" description="Helical" evidence="1">
    <location>
        <begin position="57"/>
        <end position="79"/>
    </location>
</feature>
<feature type="transmembrane region" description="Helical" evidence="1">
    <location>
        <begin position="95"/>
        <end position="115"/>
    </location>
</feature>
<feature type="transmembrane region" description="Helical" evidence="1">
    <location>
        <begin position="133"/>
        <end position="153"/>
    </location>
</feature>
<feature type="transmembrane region" description="Helical" evidence="1">
    <location>
        <begin position="158"/>
        <end position="178"/>
    </location>
</feature>
<feature type="transmembrane region" description="Helical" evidence="1">
    <location>
        <begin position="237"/>
        <end position="257"/>
    </location>
</feature>
<feature type="transmembrane region" description="Helical" evidence="1">
    <location>
        <begin position="262"/>
        <end position="282"/>
    </location>
</feature>